<protein>
    <recommendedName>
        <fullName>COMPASS component SWD2</fullName>
    </recommendedName>
    <alternativeName>
        <fullName>Complex proteins associated with SET1 protein SWD2</fullName>
    </alternativeName>
    <alternativeName>
        <fullName>Set1C component SWD2</fullName>
    </alternativeName>
</protein>
<proteinExistence type="evidence at protein level"/>
<organism>
    <name type="scientific">Saccharomyces cerevisiae (strain ATCC 204508 / S288c)</name>
    <name type="common">Baker's yeast</name>
    <dbReference type="NCBI Taxonomy" id="559292"/>
    <lineage>
        <taxon>Eukaryota</taxon>
        <taxon>Fungi</taxon>
        <taxon>Dikarya</taxon>
        <taxon>Ascomycota</taxon>
        <taxon>Saccharomycotina</taxon>
        <taxon>Saccharomycetes</taxon>
        <taxon>Saccharomycetales</taxon>
        <taxon>Saccharomycetaceae</taxon>
        <taxon>Saccharomyces</taxon>
    </lineage>
</organism>
<accession>P36104</accession>
<accession>D6VXR8</accession>
<dbReference type="EMBL" id="X74152">
    <property type="status" value="NOT_ANNOTATED_CDS"/>
    <property type="molecule type" value="Genomic_DNA"/>
</dbReference>
<dbReference type="EMBL" id="Z28018">
    <property type="protein sequence ID" value="CAA81853.1"/>
    <property type="molecule type" value="Genomic_DNA"/>
</dbReference>
<dbReference type="EMBL" id="AY558094">
    <property type="protein sequence ID" value="AAS56420.1"/>
    <property type="molecule type" value="Genomic_DNA"/>
</dbReference>
<dbReference type="EMBL" id="BK006944">
    <property type="protein sequence ID" value="DAA09138.1"/>
    <property type="molecule type" value="Genomic_DNA"/>
</dbReference>
<dbReference type="PIR" id="S37831">
    <property type="entry name" value="S37831"/>
</dbReference>
<dbReference type="RefSeq" id="NP_012907.3">
    <property type="nucleotide sequence ID" value="NM_001179584.3"/>
</dbReference>
<dbReference type="SMR" id="P36104"/>
<dbReference type="BioGRID" id="34114">
    <property type="interactions" value="173"/>
</dbReference>
<dbReference type="ComplexPortal" id="CPX-1039">
    <property type="entry name" value="COMPASS complex"/>
</dbReference>
<dbReference type="ComplexPortal" id="CPX-1053">
    <property type="entry name" value="Cleavage and polyadenylation specificity factor complex"/>
</dbReference>
<dbReference type="DIP" id="DIP-6844N"/>
<dbReference type="FunCoup" id="P36104">
    <property type="interactions" value="1219"/>
</dbReference>
<dbReference type="IntAct" id="P36104">
    <property type="interactions" value="35"/>
</dbReference>
<dbReference type="MINT" id="P36104"/>
<dbReference type="STRING" id="4932.YKL018W"/>
<dbReference type="iPTMnet" id="P36104"/>
<dbReference type="PaxDb" id="4932-YKL018W"/>
<dbReference type="PeptideAtlas" id="P36104"/>
<dbReference type="EnsemblFungi" id="YKL018W_mRNA">
    <property type="protein sequence ID" value="YKL018W"/>
    <property type="gene ID" value="YKL018W"/>
</dbReference>
<dbReference type="GeneID" id="853851"/>
<dbReference type="KEGG" id="sce:YKL018W"/>
<dbReference type="AGR" id="SGD:S000001501"/>
<dbReference type="SGD" id="S000001501">
    <property type="gene designation" value="SWD2"/>
</dbReference>
<dbReference type="VEuPathDB" id="FungiDB:YKL018W"/>
<dbReference type="eggNOG" id="KOG1446">
    <property type="taxonomic scope" value="Eukaryota"/>
</dbReference>
<dbReference type="GeneTree" id="ENSGT00530000063965"/>
<dbReference type="HOGENOM" id="CLU_044117_3_0_1"/>
<dbReference type="InParanoid" id="P36104"/>
<dbReference type="OMA" id="HNEGYIR"/>
<dbReference type="OrthoDB" id="27537at2759"/>
<dbReference type="BioCyc" id="YEAST:G3O-31827-MONOMER"/>
<dbReference type="Reactome" id="R-SCE-9772755">
    <property type="pathway name" value="Formation of WDR5-containing histone-modifying complexes"/>
</dbReference>
<dbReference type="BioGRID-ORCS" id="853851">
    <property type="hits" value="6 hits in 10 CRISPR screens"/>
</dbReference>
<dbReference type="PRO" id="PR:P36104"/>
<dbReference type="Proteomes" id="UP000002311">
    <property type="component" value="Chromosome XI"/>
</dbReference>
<dbReference type="RNAct" id="P36104">
    <property type="molecule type" value="protein"/>
</dbReference>
<dbReference type="GO" id="GO:0000781">
    <property type="term" value="C:chromosome, telomeric region"/>
    <property type="evidence" value="ECO:0007669"/>
    <property type="project" value="UniProtKB-SubCell"/>
</dbReference>
<dbReference type="GO" id="GO:0005847">
    <property type="term" value="C:mRNA cleavage and polyadenylation specificity factor complex"/>
    <property type="evidence" value="ECO:0000314"/>
    <property type="project" value="SGD"/>
</dbReference>
<dbReference type="GO" id="GO:0005634">
    <property type="term" value="C:nucleus"/>
    <property type="evidence" value="ECO:0000303"/>
    <property type="project" value="ComplexPortal"/>
</dbReference>
<dbReference type="GO" id="GO:0048188">
    <property type="term" value="C:Set1C/COMPASS complex"/>
    <property type="evidence" value="ECO:0000314"/>
    <property type="project" value="UniProtKB"/>
</dbReference>
<dbReference type="GO" id="GO:0003682">
    <property type="term" value="F:chromatin binding"/>
    <property type="evidence" value="ECO:0000318"/>
    <property type="project" value="GO_Central"/>
</dbReference>
<dbReference type="GO" id="GO:0031124">
    <property type="term" value="P:mRNA 3'-end processing"/>
    <property type="evidence" value="ECO:0000315"/>
    <property type="project" value="SGD"/>
</dbReference>
<dbReference type="GO" id="GO:0031126">
    <property type="term" value="P:sno(s)RNA 3'-end processing"/>
    <property type="evidence" value="ECO:0000315"/>
    <property type="project" value="SGD"/>
</dbReference>
<dbReference type="GO" id="GO:0031509">
    <property type="term" value="P:subtelomeric heterochromatin formation"/>
    <property type="evidence" value="ECO:0000303"/>
    <property type="project" value="ComplexPortal"/>
</dbReference>
<dbReference type="GO" id="GO:0000723">
    <property type="term" value="P:telomere maintenance"/>
    <property type="evidence" value="ECO:0000315"/>
    <property type="project" value="SGD"/>
</dbReference>
<dbReference type="GO" id="GO:0030846">
    <property type="term" value="P:termination of RNA polymerase II transcription, poly(A)-coupled"/>
    <property type="evidence" value="ECO:0000303"/>
    <property type="project" value="ComplexPortal"/>
</dbReference>
<dbReference type="FunFam" id="2.130.10.10:FF:000986">
    <property type="entry name" value="COMPASS component SWD2"/>
    <property type="match status" value="1"/>
</dbReference>
<dbReference type="FunFam" id="2.130.10.10:FF:000894">
    <property type="entry name" value="Compass component swd2"/>
    <property type="match status" value="1"/>
</dbReference>
<dbReference type="Gene3D" id="2.130.10.10">
    <property type="entry name" value="YVTN repeat-like/Quinoprotein amine dehydrogenase"/>
    <property type="match status" value="2"/>
</dbReference>
<dbReference type="InterPro" id="IPR037867">
    <property type="entry name" value="Swd2/WDR82"/>
</dbReference>
<dbReference type="InterPro" id="IPR015943">
    <property type="entry name" value="WD40/YVTN_repeat-like_dom_sf"/>
</dbReference>
<dbReference type="InterPro" id="IPR036322">
    <property type="entry name" value="WD40_repeat_dom_sf"/>
</dbReference>
<dbReference type="InterPro" id="IPR001680">
    <property type="entry name" value="WD40_rpt"/>
</dbReference>
<dbReference type="PANTHER" id="PTHR19861:SF0">
    <property type="entry name" value="WD REPEAT-CONTAINING PROTEIN 82"/>
    <property type="match status" value="1"/>
</dbReference>
<dbReference type="PANTHER" id="PTHR19861">
    <property type="entry name" value="WD40 REPEAT PROTEIN SWD2"/>
    <property type="match status" value="1"/>
</dbReference>
<dbReference type="Pfam" id="PF00400">
    <property type="entry name" value="WD40"/>
    <property type="match status" value="3"/>
</dbReference>
<dbReference type="SMART" id="SM00320">
    <property type="entry name" value="WD40"/>
    <property type="match status" value="4"/>
</dbReference>
<dbReference type="SUPFAM" id="SSF50978">
    <property type="entry name" value="WD40 repeat-like"/>
    <property type="match status" value="1"/>
</dbReference>
<dbReference type="PROSITE" id="PS50082">
    <property type="entry name" value="WD_REPEATS_2"/>
    <property type="match status" value="1"/>
</dbReference>
<dbReference type="PROSITE" id="PS50294">
    <property type="entry name" value="WD_REPEATS_REGION"/>
    <property type="match status" value="1"/>
</dbReference>
<evidence type="ECO:0000269" key="1">
    <source>
    </source>
</evidence>
<evidence type="ECO:0000269" key="2">
    <source>
    </source>
</evidence>
<evidence type="ECO:0000269" key="3">
    <source>
    </source>
</evidence>
<evidence type="ECO:0000269" key="4">
    <source>
    </source>
</evidence>
<evidence type="ECO:0000269" key="5">
    <source>
    </source>
</evidence>
<evidence type="ECO:0000305" key="6"/>
<keyword id="KW-0158">Chromosome</keyword>
<keyword id="KW-0507">mRNA processing</keyword>
<keyword id="KW-0539">Nucleus</keyword>
<keyword id="KW-1185">Reference proteome</keyword>
<keyword id="KW-0677">Repeat</keyword>
<keyword id="KW-0779">Telomere</keyword>
<keyword id="KW-0853">WD repeat</keyword>
<sequence>MTTVSINKPNLLKFKHVKSFQPQEKDCGPVTSLNFDDNGQFLLTSSSNDTMQLYSATNCKFLDTIASKKYGCHSAIFTHAQNECIYSSTMKNFDIKYLNLETNQYLRYFSGHGALVNDLKMNPVNDTFLSSSYDESVRLWDLKISKPQVIIPSLVPNCIAYDPSGLVFALGNPENFEIGLYNLKKIQEGPFLIIKINDATFSQWNKLEFSNNGKYLLVGSSIGKHLIFDAFTGQQLFELIGTRAFPMREFLDSGSACFTPDGEFVLGTDYDGRIAIWNHSDSISNKVLRPQGFIPCVSHETCPRSIAFNPKYSMFVTADETVDFYVYDE</sequence>
<comment type="function">
    <text>The COMPASS (Set1C) complex specifically mono-, di- and trimethylates histone H3 to form H3K4me1/2/3, which subsequently plays a role in telomere length maintenance and transcription elongation regulation.</text>
</comment>
<comment type="function">
    <text>Involved in mediating RNA polymerase II termination. Component of the cleavage and polyadenylation factor (CPF) complex, which plays a key role in polyadenylation-dependent pre-mRNA 3'-end formation and cooperates with cleavage factors including the CFIA complex and NAB4/CFIB. Component of the APT complex, which may be involved in polyadenylation-independent transcript 3'-end formation.</text>
</comment>
<comment type="subunit">
    <text evidence="1 2 3 5">Component of the Set1C/COMPASS complex which consists of SET1(2), BRE2(2), SPP1(2), SDC1(1), SHG1(1), SWD1(1), SWD2(1), and SWD3(1) (PubMed:11687631, PubMed:11742990, PubMed:29071121). Component of the cleavage and polyadenylation factor (CPF) complex, which is composed of PTI1, SYC1, SSU72, GLC7, MPE1, REF2, PFS2, PTA1, YSH1/BRR5, SWD2, CFT2/YDH1, YTH1, CFT1/YHH1, FIP1 and PAP1 (PubMed:12819204). Component of the APT complex, which is a subcomplex of CPF, and is composed of PTI1, SYC1, SSU72, GLC7, REF2, PTA1 and SWD2 (PubMed:12819204).</text>
</comment>
<comment type="interaction">
    <interactant intactId="EBI-26608">
        <id>P36104</id>
    </interactant>
    <interactant intactId="EBI-13715">
        <id>P32598</id>
        <label>GLC7</label>
    </interactant>
    <organismsDiffer>false</organismsDiffer>
    <experiments>6</experiments>
</comment>
<comment type="interaction">
    <interactant intactId="EBI-26608">
        <id>P36104</id>
    </interactant>
    <interactant intactId="EBI-16977">
        <id>P38827</id>
        <label>SET1</label>
    </interactant>
    <organismsDiffer>false</organismsDiffer>
    <experiments>7</experiments>
</comment>
<comment type="interaction">
    <interactant intactId="EBI-26608">
        <id>P36104</id>
    </interactant>
    <interactant intactId="EBI-32540">
        <id>Q03012</id>
        <label>SPP1</label>
    </interactant>
    <organismsDiffer>false</organismsDiffer>
    <experiments>4</experiments>
</comment>
<comment type="interaction">
    <interactant intactId="EBI-26608">
        <id>P36104</id>
    </interactant>
    <interactant intactId="EBI-18134">
        <id>P53538</id>
        <label>SSU72</label>
    </interactant>
    <organismsDiffer>false</organismsDiffer>
    <experiments>3</experiments>
</comment>
<comment type="subcellular location">
    <subcellularLocation>
        <location evidence="3">Nucleus</location>
    </subcellularLocation>
    <subcellularLocation>
        <location evidence="3">Chromosome</location>
        <location evidence="3">Telomere</location>
    </subcellularLocation>
</comment>
<comment type="miscellaneous">
    <text evidence="4">Present with 704 molecules/cell in log phase SD medium.</text>
</comment>
<comment type="similarity">
    <text evidence="6">Belongs to the WD repeat SWD2 family.</text>
</comment>
<feature type="chain" id="PRO_0000051253" description="COMPASS component SWD2">
    <location>
        <begin position="1"/>
        <end position="329"/>
    </location>
</feature>
<feature type="repeat" description="WD 1">
    <location>
        <begin position="25"/>
        <end position="64"/>
    </location>
</feature>
<feature type="repeat" description="WD 2">
    <location>
        <begin position="111"/>
        <end position="150"/>
    </location>
</feature>
<feature type="repeat" description="WD 3">
    <location>
        <begin position="152"/>
        <end position="191"/>
    </location>
</feature>
<feature type="repeat" description="WD 4">
    <location>
        <begin position="199"/>
        <end position="238"/>
    </location>
</feature>
<feature type="repeat" description="WD 5">
    <location>
        <begin position="246"/>
        <end position="287"/>
    </location>
</feature>
<feature type="repeat" description="WD 6">
    <location>
        <begin position="298"/>
        <end position="328"/>
    </location>
</feature>
<gene>
    <name type="primary">SWD2</name>
    <name type="synonym">CPS35</name>
    <name type="synonym">SAF37</name>
    <name type="ordered locus">YKL018W</name>
</gene>
<name>SWD2_YEAST</name>
<reference key="1">
    <citation type="journal article" date="1993" name="Yeast">
        <title>Sequencing and analysis of 51.6 kilobases on the left arm of chromosome XI from Saccharomyces cerevisiae reveals 23 open reading frames including the FAS1 gene.</title>
        <authorList>
            <person name="Wiemann S."/>
            <person name="Voss H."/>
            <person name="Schwager C."/>
            <person name="Rupp T."/>
            <person name="Stegemann J."/>
            <person name="Zimmermann J."/>
            <person name="Grothues D."/>
            <person name="Sensen C."/>
            <person name="Erfle H."/>
            <person name="Hewitt N."/>
            <person name="Banrevi A."/>
            <person name="Ansorge W."/>
        </authorList>
    </citation>
    <scope>NUCLEOTIDE SEQUENCE [GENOMIC DNA]</scope>
</reference>
<reference key="2">
    <citation type="journal article" date="1994" name="Nature">
        <title>Complete DNA sequence of yeast chromosome XI.</title>
        <authorList>
            <person name="Dujon B."/>
            <person name="Alexandraki D."/>
            <person name="Andre B."/>
            <person name="Ansorge W."/>
            <person name="Baladron V."/>
            <person name="Ballesta J.P.G."/>
            <person name="Banrevi A."/>
            <person name="Bolle P.-A."/>
            <person name="Bolotin-Fukuhara M."/>
            <person name="Bossier P."/>
            <person name="Bou G."/>
            <person name="Boyer J."/>
            <person name="Buitrago M.J."/>
            <person name="Cheret G."/>
            <person name="Colleaux L."/>
            <person name="Daignan-Fornier B."/>
            <person name="del Rey F."/>
            <person name="Dion C."/>
            <person name="Domdey H."/>
            <person name="Duesterhoeft A."/>
            <person name="Duesterhus S."/>
            <person name="Entian K.-D."/>
            <person name="Erfle H."/>
            <person name="Esteban P.F."/>
            <person name="Feldmann H."/>
            <person name="Fernandes L."/>
            <person name="Fobo G.M."/>
            <person name="Fritz C."/>
            <person name="Fukuhara H."/>
            <person name="Gabel C."/>
            <person name="Gaillon L."/>
            <person name="Garcia-Cantalejo J.M."/>
            <person name="Garcia-Ramirez J.J."/>
            <person name="Gent M.E."/>
            <person name="Ghazvini M."/>
            <person name="Goffeau A."/>
            <person name="Gonzalez A."/>
            <person name="Grothues D."/>
            <person name="Guerreiro P."/>
            <person name="Hegemann J.H."/>
            <person name="Hewitt N."/>
            <person name="Hilger F."/>
            <person name="Hollenberg C.P."/>
            <person name="Horaitis O."/>
            <person name="Indge K.J."/>
            <person name="Jacquier A."/>
            <person name="James C.M."/>
            <person name="Jauniaux J.-C."/>
            <person name="Jimenez A."/>
            <person name="Keuchel H."/>
            <person name="Kirchrath L."/>
            <person name="Kleine K."/>
            <person name="Koetter P."/>
            <person name="Legrain P."/>
            <person name="Liebl S."/>
            <person name="Louis E.J."/>
            <person name="Maia e Silva A."/>
            <person name="Marck C."/>
            <person name="Monnier A.-L."/>
            <person name="Moestl D."/>
            <person name="Mueller S."/>
            <person name="Obermaier B."/>
            <person name="Oliver S.G."/>
            <person name="Pallier C."/>
            <person name="Pascolo S."/>
            <person name="Pfeiffer F."/>
            <person name="Philippsen P."/>
            <person name="Planta R.J."/>
            <person name="Pohl F.M."/>
            <person name="Pohl T.M."/>
            <person name="Poehlmann R."/>
            <person name="Portetelle D."/>
            <person name="Purnelle B."/>
            <person name="Puzos V."/>
            <person name="Ramezani Rad M."/>
            <person name="Rasmussen S.W."/>
            <person name="Remacha M.A."/>
            <person name="Revuelta J.L."/>
            <person name="Richard G.-F."/>
            <person name="Rieger M."/>
            <person name="Rodrigues-Pousada C."/>
            <person name="Rose M."/>
            <person name="Rupp T."/>
            <person name="Santos M.A."/>
            <person name="Schwager C."/>
            <person name="Sensen C."/>
            <person name="Skala J."/>
            <person name="Soares H."/>
            <person name="Sor F."/>
            <person name="Stegemann J."/>
            <person name="Tettelin H."/>
            <person name="Thierry A."/>
            <person name="Tzermia M."/>
            <person name="Urrestarazu L.A."/>
            <person name="van Dyck L."/>
            <person name="van Vliet-Reedijk J.C."/>
            <person name="Valens M."/>
            <person name="Vandenbol M."/>
            <person name="Vilela C."/>
            <person name="Vissers S."/>
            <person name="von Wettstein D."/>
            <person name="Voss H."/>
            <person name="Wiemann S."/>
            <person name="Xu G."/>
            <person name="Zimmermann J."/>
            <person name="Haasemann M."/>
            <person name="Becker I."/>
            <person name="Mewes H.-W."/>
        </authorList>
    </citation>
    <scope>NUCLEOTIDE SEQUENCE [LARGE SCALE GENOMIC DNA]</scope>
    <source>
        <strain>ATCC 204508 / S288c</strain>
    </source>
</reference>
<reference key="3">
    <citation type="journal article" date="2014" name="G3 (Bethesda)">
        <title>The reference genome sequence of Saccharomyces cerevisiae: Then and now.</title>
        <authorList>
            <person name="Engel S.R."/>
            <person name="Dietrich F.S."/>
            <person name="Fisk D.G."/>
            <person name="Binkley G."/>
            <person name="Balakrishnan R."/>
            <person name="Costanzo M.C."/>
            <person name="Dwight S.S."/>
            <person name="Hitz B.C."/>
            <person name="Karra K."/>
            <person name="Nash R.S."/>
            <person name="Weng S."/>
            <person name="Wong E.D."/>
            <person name="Lloyd P."/>
            <person name="Skrzypek M.S."/>
            <person name="Miyasato S.R."/>
            <person name="Simison M."/>
            <person name="Cherry J.M."/>
        </authorList>
    </citation>
    <scope>GENOME REANNOTATION</scope>
    <source>
        <strain>ATCC 204508 / S288c</strain>
    </source>
</reference>
<reference key="4">
    <citation type="journal article" date="2007" name="Genome Res.">
        <title>Approaching a complete repository of sequence-verified protein-encoding clones for Saccharomyces cerevisiae.</title>
        <authorList>
            <person name="Hu Y."/>
            <person name="Rolfs A."/>
            <person name="Bhullar B."/>
            <person name="Murthy T.V.S."/>
            <person name="Zhu C."/>
            <person name="Berger M.F."/>
            <person name="Camargo A.A."/>
            <person name="Kelley F."/>
            <person name="McCarron S."/>
            <person name="Jepson D."/>
            <person name="Richardson A."/>
            <person name="Raphael J."/>
            <person name="Moreira D."/>
            <person name="Taycher E."/>
            <person name="Zuo D."/>
            <person name="Mohr S."/>
            <person name="Kane M.F."/>
            <person name="Williamson J."/>
            <person name="Simpson A.J.G."/>
            <person name="Bulyk M.L."/>
            <person name="Harlow E."/>
            <person name="Marsischky G."/>
            <person name="Kolodner R.D."/>
            <person name="LaBaer J."/>
        </authorList>
    </citation>
    <scope>NUCLEOTIDE SEQUENCE [GENOMIC DNA]</scope>
    <source>
        <strain>ATCC 204508 / S288c</strain>
    </source>
</reference>
<reference key="5">
    <citation type="journal article" date="2001" name="EMBO J.">
        <title>The Saccharomyces cerevisiae Set1 complex includes an Ash2 homologue and methylates histone 3 lysine 4.</title>
        <authorList>
            <person name="Roguev A."/>
            <person name="Schaft D."/>
            <person name="Shevchenko A."/>
            <person name="Pijnappel W.W.M.P."/>
            <person name="Wilm M."/>
            <person name="Aasland R."/>
            <person name="Stewart A.F."/>
        </authorList>
    </citation>
    <scope>FUNCTION</scope>
    <scope>SUBUNIT</scope>
</reference>
<reference key="6">
    <citation type="journal article" date="2001" name="Proc. Natl. Acad. Sci. U.S.A.">
        <title>COMPASS: a complex of proteins associated with a trithorax-related SET domain protein.</title>
        <authorList>
            <person name="Miller T."/>
            <person name="Krogan N.J."/>
            <person name="Dover J."/>
            <person name="Erdjument-Bromage H."/>
            <person name="Tempst P."/>
            <person name="Johnston M."/>
            <person name="Greenblatt J.F."/>
            <person name="Shilatifard A."/>
        </authorList>
    </citation>
    <scope>SUBUNIT</scope>
</reference>
<reference key="7">
    <citation type="journal article" date="2002" name="J. Biol. Chem.">
        <title>COMPASS, a histone H3 (Lysine 4) methyltransferase required for telomeric silencing of gene expression.</title>
        <authorList>
            <person name="Krogan N.J."/>
            <person name="Dover J."/>
            <person name="Khorrami S."/>
            <person name="Greenblatt J.F."/>
            <person name="Schneider J."/>
            <person name="Johnston M."/>
            <person name="Shilatifard A."/>
        </authorList>
    </citation>
    <scope>FUNCTION</scope>
</reference>
<reference key="8">
    <citation type="journal article" date="2003" name="J. Biol. Chem.">
        <title>Organization and function of APT, a subcomplex of the yeast cleavage and polyadenylation factor involved in the formation of mRNA and small nucleolar RNA 3'-ends.</title>
        <authorList>
            <person name="Nedea E."/>
            <person name="He X."/>
            <person name="Kim M."/>
            <person name="Pootoolal J."/>
            <person name="Zhong G."/>
            <person name="Canadien V."/>
            <person name="Hughes T."/>
            <person name="Buratowski S."/>
            <person name="Moore C.L."/>
            <person name="Greenblatt J."/>
        </authorList>
    </citation>
    <scope>IDENTIFICATION IN THE CPF COMPLEX</scope>
    <scope>COMPOSITION OF THE APT COMPLEX</scope>
    <scope>SUBCELLULAR LOCATION</scope>
    <scope>IDENTIFICATION BY MASS SPECTROMETRY</scope>
</reference>
<reference key="9">
    <citation type="journal article" date="2003" name="Nature">
        <title>Global analysis of protein expression in yeast.</title>
        <authorList>
            <person name="Ghaemmaghami S."/>
            <person name="Huh W.-K."/>
            <person name="Bower K."/>
            <person name="Howson R.W."/>
            <person name="Belle A."/>
            <person name="Dephoure N."/>
            <person name="O'Shea E.K."/>
            <person name="Weissman J.S."/>
        </authorList>
    </citation>
    <scope>LEVEL OF PROTEIN EXPRESSION [LARGE SCALE ANALYSIS]</scope>
</reference>
<reference key="10">
    <citation type="journal article" date="2004" name="Mol. Cell. Biol.">
        <title>The essential WD repeat protein Swd2 has dual functions in RNA polymerase II transcription termination and lysine 4 methylation of histone H3.</title>
        <authorList>
            <person name="Cheng H."/>
            <person name="He X."/>
            <person name="Moore C."/>
        </authorList>
    </citation>
    <scope>FUNCTION</scope>
</reference>
<reference key="11">
    <citation type="journal article" date="2017" name="Cell Discov.">
        <title>Binding to RNA regulates Set1 function.</title>
        <authorList>
            <person name="Luciano P."/>
            <person name="Jeon J."/>
            <person name="El-Kaoutari A."/>
            <person name="Challal D."/>
            <person name="Bonnet A."/>
            <person name="Barucco M."/>
            <person name="Candelli T."/>
            <person name="Jourquin F."/>
            <person name="Lesage P."/>
            <person name="Kim J."/>
            <person name="Libri D."/>
            <person name="Geli V."/>
        </authorList>
    </citation>
    <scope>IDENTIFICATION IN THE SET1C/COMPASS COMPLEX</scope>
</reference>